<dbReference type="EC" id="4.2.1.59" evidence="1"/>
<dbReference type="EMBL" id="CP000232">
    <property type="protein sequence ID" value="ABC18552.1"/>
    <property type="molecule type" value="Genomic_DNA"/>
</dbReference>
<dbReference type="RefSeq" id="YP_429095.1">
    <property type="nucleotide sequence ID" value="NC_007644.1"/>
</dbReference>
<dbReference type="SMR" id="Q2RLY7"/>
<dbReference type="STRING" id="264732.Moth_0217"/>
<dbReference type="EnsemblBacteria" id="ABC18552">
    <property type="protein sequence ID" value="ABC18552"/>
    <property type="gene ID" value="Moth_0217"/>
</dbReference>
<dbReference type="KEGG" id="mta:Moth_0217"/>
<dbReference type="PATRIC" id="fig|264732.11.peg.229"/>
<dbReference type="eggNOG" id="COG0764">
    <property type="taxonomic scope" value="Bacteria"/>
</dbReference>
<dbReference type="HOGENOM" id="CLU_078912_3_0_9"/>
<dbReference type="OrthoDB" id="9772788at2"/>
<dbReference type="GO" id="GO:0005737">
    <property type="term" value="C:cytoplasm"/>
    <property type="evidence" value="ECO:0007669"/>
    <property type="project" value="UniProtKB-SubCell"/>
</dbReference>
<dbReference type="GO" id="GO:0016020">
    <property type="term" value="C:membrane"/>
    <property type="evidence" value="ECO:0007669"/>
    <property type="project" value="GOC"/>
</dbReference>
<dbReference type="GO" id="GO:0019171">
    <property type="term" value="F:(3R)-hydroxyacyl-[acyl-carrier-protein] dehydratase activity"/>
    <property type="evidence" value="ECO:0007669"/>
    <property type="project" value="UniProtKB-EC"/>
</dbReference>
<dbReference type="GO" id="GO:0006633">
    <property type="term" value="P:fatty acid biosynthetic process"/>
    <property type="evidence" value="ECO:0007669"/>
    <property type="project" value="UniProtKB-UniRule"/>
</dbReference>
<dbReference type="GO" id="GO:0009245">
    <property type="term" value="P:lipid A biosynthetic process"/>
    <property type="evidence" value="ECO:0007669"/>
    <property type="project" value="UniProtKB-UniRule"/>
</dbReference>
<dbReference type="CDD" id="cd01288">
    <property type="entry name" value="FabZ"/>
    <property type="match status" value="1"/>
</dbReference>
<dbReference type="FunFam" id="3.10.129.10:FF:000001">
    <property type="entry name" value="3-hydroxyacyl-[acyl-carrier-protein] dehydratase FabZ"/>
    <property type="match status" value="1"/>
</dbReference>
<dbReference type="Gene3D" id="3.10.129.10">
    <property type="entry name" value="Hotdog Thioesterase"/>
    <property type="match status" value="1"/>
</dbReference>
<dbReference type="HAMAP" id="MF_00406">
    <property type="entry name" value="FabZ"/>
    <property type="match status" value="1"/>
</dbReference>
<dbReference type="InterPro" id="IPR013114">
    <property type="entry name" value="FabA_FabZ"/>
</dbReference>
<dbReference type="InterPro" id="IPR010084">
    <property type="entry name" value="FabZ"/>
</dbReference>
<dbReference type="InterPro" id="IPR029069">
    <property type="entry name" value="HotDog_dom_sf"/>
</dbReference>
<dbReference type="NCBIfam" id="TIGR01750">
    <property type="entry name" value="fabZ"/>
    <property type="match status" value="1"/>
</dbReference>
<dbReference type="NCBIfam" id="NF000582">
    <property type="entry name" value="PRK00006.1"/>
    <property type="match status" value="1"/>
</dbReference>
<dbReference type="PANTHER" id="PTHR30272">
    <property type="entry name" value="3-HYDROXYACYL-[ACYL-CARRIER-PROTEIN] DEHYDRATASE"/>
    <property type="match status" value="1"/>
</dbReference>
<dbReference type="PANTHER" id="PTHR30272:SF1">
    <property type="entry name" value="3-HYDROXYACYL-[ACYL-CARRIER-PROTEIN] DEHYDRATASE"/>
    <property type="match status" value="1"/>
</dbReference>
<dbReference type="Pfam" id="PF07977">
    <property type="entry name" value="FabA"/>
    <property type="match status" value="1"/>
</dbReference>
<dbReference type="SUPFAM" id="SSF54637">
    <property type="entry name" value="Thioesterase/thiol ester dehydrase-isomerase"/>
    <property type="match status" value="1"/>
</dbReference>
<comment type="function">
    <text evidence="1">Involved in unsaturated fatty acids biosynthesis. Catalyzes the dehydration of short chain beta-hydroxyacyl-ACPs and long chain saturated and unsaturated beta-hydroxyacyl-ACPs.</text>
</comment>
<comment type="catalytic activity">
    <reaction evidence="1">
        <text>a (3R)-hydroxyacyl-[ACP] = a (2E)-enoyl-[ACP] + H2O</text>
        <dbReference type="Rhea" id="RHEA:13097"/>
        <dbReference type="Rhea" id="RHEA-COMP:9925"/>
        <dbReference type="Rhea" id="RHEA-COMP:9945"/>
        <dbReference type="ChEBI" id="CHEBI:15377"/>
        <dbReference type="ChEBI" id="CHEBI:78784"/>
        <dbReference type="ChEBI" id="CHEBI:78827"/>
        <dbReference type="EC" id="4.2.1.59"/>
    </reaction>
</comment>
<comment type="subcellular location">
    <subcellularLocation>
        <location evidence="1">Cytoplasm</location>
    </subcellularLocation>
</comment>
<comment type="similarity">
    <text evidence="1">Belongs to the thioester dehydratase family. FabZ subfamily.</text>
</comment>
<keyword id="KW-0963">Cytoplasm</keyword>
<keyword id="KW-0441">Lipid A biosynthesis</keyword>
<keyword id="KW-0444">Lipid biosynthesis</keyword>
<keyword id="KW-0443">Lipid metabolism</keyword>
<keyword id="KW-0456">Lyase</keyword>
<reference key="1">
    <citation type="journal article" date="2008" name="Environ. Microbiol.">
        <title>The complete genome sequence of Moorella thermoacetica (f. Clostridium thermoaceticum).</title>
        <authorList>
            <person name="Pierce E."/>
            <person name="Xie G."/>
            <person name="Barabote R.D."/>
            <person name="Saunders E."/>
            <person name="Han C.S."/>
            <person name="Detter J.C."/>
            <person name="Richardson P."/>
            <person name="Brettin T.S."/>
            <person name="Das A."/>
            <person name="Ljungdahl L.G."/>
            <person name="Ragsdale S.W."/>
        </authorList>
    </citation>
    <scope>NUCLEOTIDE SEQUENCE [LARGE SCALE GENOMIC DNA]</scope>
    <source>
        <strain>ATCC 39073 / JCM 9320</strain>
    </source>
</reference>
<proteinExistence type="inferred from homology"/>
<evidence type="ECO:0000255" key="1">
    <source>
        <dbReference type="HAMAP-Rule" id="MF_00406"/>
    </source>
</evidence>
<feature type="chain" id="PRO_0000230817" description="3-hydroxyacyl-[acyl-carrier-protein] dehydratase FabZ">
    <location>
        <begin position="1"/>
        <end position="143"/>
    </location>
</feature>
<feature type="active site" evidence="1">
    <location>
        <position position="47"/>
    </location>
</feature>
<organism>
    <name type="scientific">Moorella thermoacetica (strain ATCC 39073 / JCM 9320)</name>
    <dbReference type="NCBI Taxonomy" id="264732"/>
    <lineage>
        <taxon>Bacteria</taxon>
        <taxon>Bacillati</taxon>
        <taxon>Bacillota</taxon>
        <taxon>Clostridia</taxon>
        <taxon>Moorellales</taxon>
        <taxon>Moorellaceae</taxon>
        <taxon>Moorella</taxon>
    </lineage>
</organism>
<protein>
    <recommendedName>
        <fullName evidence="1">3-hydroxyacyl-[acyl-carrier-protein] dehydratase FabZ</fullName>
        <ecNumber evidence="1">4.2.1.59</ecNumber>
    </recommendedName>
    <alternativeName>
        <fullName evidence="1">(3R)-hydroxymyristoyl-[acyl-carrier-protein] dehydratase</fullName>
        <shortName evidence="1">(3R)-hydroxymyristoyl-ACP dehydrase</shortName>
    </alternativeName>
    <alternativeName>
        <fullName evidence="1">Beta-hydroxyacyl-ACP dehydratase</fullName>
    </alternativeName>
</protein>
<gene>
    <name evidence="1" type="primary">fabZ</name>
    <name type="ordered locus">Moth_0217</name>
</gene>
<sequence>MDWNAIQGILPHRYPFLLVDRVLEVEAGRRAVGQKNVSGNEWYFSGHFPGQPVMPGVLIMEALAQVGAVALLSLPEFQGRLALFGGMDRVRFRRQVVPGDVLRLETEIIKLKGRVGKGYGRAFVGEELAAEGELLFAVGEKIE</sequence>
<name>FABZ_MOOTA</name>
<accession>Q2RLY7</accession>